<sequence length="374" mass="42075">MHFTQVLISLSVLIACGPVGYGDITAHQQPSTATEESEQCSTCEFRQHSKLMRLHAIKSQILSKLRLKQAPNISRDVVKQLLPKAPPLQQLLDQYDVLGDDSKDGAVEEDDEHATTETIMTMATEPDPIVQVDRKPKCCFFSFSPKIQANRIVRAQLWVHLRPAEEATTVFLQISRLMPVKDGGRHRIRSLKIDVNAGVTSWQSIDVKQVLTVWLKQPETNRGIEINAYDAKGNDLAVTSTETGEDGLLPFMEVKISEGPKRIRRDSGLDCDENSSESRCCRYPLTVDFEDFGWDWIIAPKRYKANYCSGECDYMYLQKYPHTHLVNKASPRGTAGPCCTPTKMSPINMLYFNGKEQIIYGKIPSMVVDRCGCS</sequence>
<organism>
    <name type="scientific">Danio rerio</name>
    <name type="common">Zebrafish</name>
    <name type="synonym">Brachydanio rerio</name>
    <dbReference type="NCBI Taxonomy" id="7955"/>
    <lineage>
        <taxon>Eukaryota</taxon>
        <taxon>Metazoa</taxon>
        <taxon>Chordata</taxon>
        <taxon>Craniata</taxon>
        <taxon>Vertebrata</taxon>
        <taxon>Euteleostomi</taxon>
        <taxon>Actinopterygii</taxon>
        <taxon>Neopterygii</taxon>
        <taxon>Teleostei</taxon>
        <taxon>Ostariophysi</taxon>
        <taxon>Cypriniformes</taxon>
        <taxon>Danionidae</taxon>
        <taxon>Danioninae</taxon>
        <taxon>Danio</taxon>
    </lineage>
</organism>
<reference key="1">
    <citation type="journal article" date="1997" name="Proc. Natl. Acad. Sci. U.S.A.">
        <title>Double muscling in cattle due to mutations in the myostatin gene.</title>
        <authorList>
            <person name="McPherron A.C."/>
            <person name="Lee S.-J."/>
        </authorList>
    </citation>
    <scope>NUCLEOTIDE SEQUENCE [MRNA]</scope>
    <source>
        <tissue>Skeletal muscle</tissue>
    </source>
</reference>
<reference key="2">
    <citation type="journal article" date="2003" name="J. Exp. Biol.">
        <title>Analysis of myostatin gene structure, expression and function in zebrafish.</title>
        <authorList>
            <person name="Xu C."/>
            <person name="Wu G."/>
            <person name="Zohar Y."/>
            <person name="Du S.-J."/>
        </authorList>
    </citation>
    <scope>NUCLEOTIDE SEQUENCE [GENOMIC DNA]</scope>
    <scope>FUNCTION</scope>
    <scope>DEVELOPMENTAL STAGE</scope>
</reference>
<reference key="3">
    <citation type="submission" date="2002-08" db="EMBL/GenBank/DDBJ databases">
        <title>Molecular cloning and characterization of myostatin (double muscle gene) in various aquatic organisms.</title>
        <authorList>
            <person name="Ko Y.-L."/>
            <person name="Lu J.-K."/>
            <person name="Wu J.-L."/>
        </authorList>
    </citation>
    <scope>NUCLEOTIDE SEQUENCE [MRNA]</scope>
</reference>
<reference key="4">
    <citation type="submission" date="2003-03" db="EMBL/GenBank/DDBJ databases">
        <title>Pattern and tissue distribution of myostatin-1 in zebrafish embryo.</title>
        <authorList>
            <person name="Amali A.A."/>
            <person name="Lin C.J.-F."/>
            <person name="Gong H.-Y."/>
            <person name="Ko Y.-L."/>
            <person name="Lu J.-K."/>
            <person name="Wu J.-L."/>
        </authorList>
    </citation>
    <scope>NUCLEOTIDE SEQUENCE [MRNA]</scope>
</reference>
<reference key="5">
    <citation type="journal article" date="2013" name="Nature">
        <title>The zebrafish reference genome sequence and its relationship to the human genome.</title>
        <authorList>
            <person name="Howe K."/>
            <person name="Clark M.D."/>
            <person name="Torroja C.F."/>
            <person name="Torrance J."/>
            <person name="Berthelot C."/>
            <person name="Muffato M."/>
            <person name="Collins J.E."/>
            <person name="Humphray S."/>
            <person name="McLaren K."/>
            <person name="Matthews L."/>
            <person name="McLaren S."/>
            <person name="Sealy I."/>
            <person name="Caccamo M."/>
            <person name="Churcher C."/>
            <person name="Scott C."/>
            <person name="Barrett J.C."/>
            <person name="Koch R."/>
            <person name="Rauch G.J."/>
            <person name="White S."/>
            <person name="Chow W."/>
            <person name="Kilian B."/>
            <person name="Quintais L.T."/>
            <person name="Guerra-Assuncao J.A."/>
            <person name="Zhou Y."/>
            <person name="Gu Y."/>
            <person name="Yen J."/>
            <person name="Vogel J.H."/>
            <person name="Eyre T."/>
            <person name="Redmond S."/>
            <person name="Banerjee R."/>
            <person name="Chi J."/>
            <person name="Fu B."/>
            <person name="Langley E."/>
            <person name="Maguire S.F."/>
            <person name="Laird G.K."/>
            <person name="Lloyd D."/>
            <person name="Kenyon E."/>
            <person name="Donaldson S."/>
            <person name="Sehra H."/>
            <person name="Almeida-King J."/>
            <person name="Loveland J."/>
            <person name="Trevanion S."/>
            <person name="Jones M."/>
            <person name="Quail M."/>
            <person name="Willey D."/>
            <person name="Hunt A."/>
            <person name="Burton J."/>
            <person name="Sims S."/>
            <person name="McLay K."/>
            <person name="Plumb B."/>
            <person name="Davis J."/>
            <person name="Clee C."/>
            <person name="Oliver K."/>
            <person name="Clark R."/>
            <person name="Riddle C."/>
            <person name="Elliot D."/>
            <person name="Threadgold G."/>
            <person name="Harden G."/>
            <person name="Ware D."/>
            <person name="Begum S."/>
            <person name="Mortimore B."/>
            <person name="Kerry G."/>
            <person name="Heath P."/>
            <person name="Phillimore B."/>
            <person name="Tracey A."/>
            <person name="Corby N."/>
            <person name="Dunn M."/>
            <person name="Johnson C."/>
            <person name="Wood J."/>
            <person name="Clark S."/>
            <person name="Pelan S."/>
            <person name="Griffiths G."/>
            <person name="Smith M."/>
            <person name="Glithero R."/>
            <person name="Howden P."/>
            <person name="Barker N."/>
            <person name="Lloyd C."/>
            <person name="Stevens C."/>
            <person name="Harley J."/>
            <person name="Holt K."/>
            <person name="Panagiotidis G."/>
            <person name="Lovell J."/>
            <person name="Beasley H."/>
            <person name="Henderson C."/>
            <person name="Gordon D."/>
            <person name="Auger K."/>
            <person name="Wright D."/>
            <person name="Collins J."/>
            <person name="Raisen C."/>
            <person name="Dyer L."/>
            <person name="Leung K."/>
            <person name="Robertson L."/>
            <person name="Ambridge K."/>
            <person name="Leongamornlert D."/>
            <person name="McGuire S."/>
            <person name="Gilderthorp R."/>
            <person name="Griffiths C."/>
            <person name="Manthravadi D."/>
            <person name="Nichol S."/>
            <person name="Barker G."/>
            <person name="Whitehead S."/>
            <person name="Kay M."/>
            <person name="Brown J."/>
            <person name="Murnane C."/>
            <person name="Gray E."/>
            <person name="Humphries M."/>
            <person name="Sycamore N."/>
            <person name="Barker D."/>
            <person name="Saunders D."/>
            <person name="Wallis J."/>
            <person name="Babbage A."/>
            <person name="Hammond S."/>
            <person name="Mashreghi-Mohammadi M."/>
            <person name="Barr L."/>
            <person name="Martin S."/>
            <person name="Wray P."/>
            <person name="Ellington A."/>
            <person name="Matthews N."/>
            <person name="Ellwood M."/>
            <person name="Woodmansey R."/>
            <person name="Clark G."/>
            <person name="Cooper J."/>
            <person name="Tromans A."/>
            <person name="Grafham D."/>
            <person name="Skuce C."/>
            <person name="Pandian R."/>
            <person name="Andrews R."/>
            <person name="Harrison E."/>
            <person name="Kimberley A."/>
            <person name="Garnett J."/>
            <person name="Fosker N."/>
            <person name="Hall R."/>
            <person name="Garner P."/>
            <person name="Kelly D."/>
            <person name="Bird C."/>
            <person name="Palmer S."/>
            <person name="Gehring I."/>
            <person name="Berger A."/>
            <person name="Dooley C.M."/>
            <person name="Ersan-Urun Z."/>
            <person name="Eser C."/>
            <person name="Geiger H."/>
            <person name="Geisler M."/>
            <person name="Karotki L."/>
            <person name="Kirn A."/>
            <person name="Konantz J."/>
            <person name="Konantz M."/>
            <person name="Oberlander M."/>
            <person name="Rudolph-Geiger S."/>
            <person name="Teucke M."/>
            <person name="Lanz C."/>
            <person name="Raddatz G."/>
            <person name="Osoegawa K."/>
            <person name="Zhu B."/>
            <person name="Rapp A."/>
            <person name="Widaa S."/>
            <person name="Langford C."/>
            <person name="Yang F."/>
            <person name="Schuster S.C."/>
            <person name="Carter N.P."/>
            <person name="Harrow J."/>
            <person name="Ning Z."/>
            <person name="Herrero J."/>
            <person name="Searle S.M."/>
            <person name="Enright A."/>
            <person name="Geisler R."/>
            <person name="Plasterk R.H."/>
            <person name="Lee C."/>
            <person name="Westerfield M."/>
            <person name="de Jong P.J."/>
            <person name="Zon L.I."/>
            <person name="Postlethwait J.H."/>
            <person name="Nusslein-Volhard C."/>
            <person name="Hubbard T.J."/>
            <person name="Roest Crollius H."/>
            <person name="Rogers J."/>
            <person name="Stemple D.L."/>
        </authorList>
    </citation>
    <scope>NUCLEOTIDE SEQUENCE [LARGE SCALE GENOMIC DNA]</scope>
    <source>
        <strain>Tuebingen</strain>
    </source>
</reference>
<reference key="6">
    <citation type="journal article" date="2003" name="J. Endocrinol.">
        <title>Myostatin expression during development and chronic stress in zebrafish (Danio rerio).</title>
        <authorList>
            <person name="Vianello S."/>
            <person name="Brazzoduro L."/>
            <person name="Dalla Valle L."/>
            <person name="Belvedere P."/>
            <person name="Colombo L."/>
        </authorList>
    </citation>
    <scope>NUCLEOTIDE SEQUENCE [MRNA] OF 1-33</scope>
    <scope>DEVELOPMENTAL STAGE</scope>
    <scope>INDUCTION</scope>
    <source>
        <tissue>Liver</tissue>
    </source>
</reference>
<reference key="7">
    <citation type="journal article" date="2003" name="Cell Tissue Res.">
        <title>Myostatin precursor is present in several tissues in teleost fish: a comparative immunolocalization study.</title>
        <authorList>
            <person name="Radaelli G."/>
            <person name="Rowlerson A."/>
            <person name="Mascarello F."/>
            <person name="Patruno M."/>
            <person name="Funkenstein B."/>
        </authorList>
    </citation>
    <scope>TISSUE SPECIFICITY</scope>
</reference>
<reference key="8">
    <citation type="journal article" date="2004" name="Dev. Dyn.">
        <title>Up-regulation of muscle-specific transcription factors during embryonic somitogenesis of zebrafish (Danio rerio) by knock-down of myostatin-1.</title>
        <authorList>
            <person name="Amali A.A."/>
            <person name="Lin C.J.-F."/>
            <person name="Chen Y.-H."/>
            <person name="Wang W.-L."/>
            <person name="Gong H.-Y."/>
            <person name="Lee C.-Y."/>
            <person name="Ko Y.-L."/>
            <person name="Lu J.-K."/>
            <person name="Her G.M."/>
            <person name="Chen T.T."/>
            <person name="Wu J.-L."/>
        </authorList>
    </citation>
    <scope>FUNCTION</scope>
    <scope>TISSUE SPECIFICITY</scope>
    <scope>DEVELOPMENTAL STAGE</scope>
</reference>
<reference key="9">
    <citation type="journal article" date="2005" name="Evol. Dev.">
        <title>Phylogenetic analysis of the myostatin gene sub-family and the differential expression of a novel member in zebrafish.</title>
        <authorList>
            <person name="Kerr T."/>
            <person name="Roalson E.H."/>
            <person name="Rodgers B.D."/>
        </authorList>
    </citation>
    <scope>DEVELOPMENTAL STAGE</scope>
</reference>
<reference key="10">
    <citation type="journal article" date="2005" name="J. Biotechnol.">
        <title>Myostatin gene silenced by RNAi show a zebrafish giant phenotype.</title>
        <authorList>
            <person name="Acosta J."/>
            <person name="Carpio Y."/>
            <person name="Borroto I."/>
            <person name="Gonzalez O."/>
            <person name="Estrada M.P."/>
        </authorList>
    </citation>
    <scope>FUNCTION</scope>
    <scope>DISRUPTION PHENOTYPE</scope>
</reference>
<reference key="11">
    <citation type="journal article" date="2007" name="Gen. Comp. Endocrinol.">
        <title>Embryonic and tissue-specific regulation of myostatin-1 and -2 gene expression in zebrafish.</title>
        <authorList>
            <person name="Helterline D.L.I."/>
            <person name="Garikipati D."/>
            <person name="Stenkamp D.L."/>
            <person name="Rodgers B.D."/>
        </authorList>
    </citation>
    <scope>TISSUE SPECIFICITY</scope>
    <scope>DEVELOPMENTAL STAGE</scope>
    <scope>INDUCTION</scope>
</reference>
<comment type="function">
    <text evidence="6 7 8">Acts specifically as a negative regulator of skeletal muscle growth. May down-regulate muscle-specific transcription factors such as myod and myog.</text>
</comment>
<comment type="subunit">
    <text evidence="1">Homodimer; disulfide-linked.</text>
</comment>
<comment type="subcellular location">
    <subcellularLocation>
        <location evidence="1">Secreted</location>
    </subcellularLocation>
</comment>
<comment type="tissue specificity">
    <text evidence="5 7 10">Predominantly expressed in muscle. At hatching, expression is strongest in the skin epithelium, and is also found in the retina and brain. From day 28, expressed in skeletal muscle. In the adult, highest expression is seen in the gastrointestinal tract, brain, muscle, heart and testis. Also expressed in the adult pharynx, kidney, spleen, liver, gill, eyes, skin, swim bladder and ovary.</text>
</comment>
<comment type="developmental stage">
    <text evidence="4 6 7 9 10">Expressed both maternally and zygotically. Weakly expressed ubiquitously in early stage embryos. Present transiently in the blastula with levels dropping almost completely during gastrulation. Expression peaks during late somitogenesis, decreases at the end of somitogenesis, and then rises again at and after hatching. Strongly expressed in swimming larvae, juveniles and adults.</text>
</comment>
<comment type="induction">
    <text evidence="4 10">Repressed in adult muscle, and stimulated in adult spleen, when fish are grown in overcrowded conditions.</text>
</comment>
<comment type="disruption phenotype">
    <text evidence="8">Defects produce a giant phenotype.</text>
</comment>
<comment type="similarity">
    <text evidence="11">Belongs to the TGF-beta family.</text>
</comment>
<evidence type="ECO:0000250" key="1"/>
<evidence type="ECO:0000250" key="2">
    <source>
        <dbReference type="UniProtKB" id="O08689"/>
    </source>
</evidence>
<evidence type="ECO:0000255" key="3"/>
<evidence type="ECO:0000269" key="4">
    <source>
    </source>
</evidence>
<evidence type="ECO:0000269" key="5">
    <source>
    </source>
</evidence>
<evidence type="ECO:0000269" key="6">
    <source>
    </source>
</evidence>
<evidence type="ECO:0000269" key="7">
    <source>
    </source>
</evidence>
<evidence type="ECO:0000269" key="8">
    <source>
    </source>
</evidence>
<evidence type="ECO:0000269" key="9">
    <source>
    </source>
</evidence>
<evidence type="ECO:0000269" key="10">
    <source>
    </source>
</evidence>
<evidence type="ECO:0000305" key="11"/>
<dbReference type="EMBL" id="AF019626">
    <property type="protein sequence ID" value="AAB86693.1"/>
    <property type="molecule type" value="mRNA"/>
</dbReference>
<dbReference type="EMBL" id="AY323521">
    <property type="protein sequence ID" value="AAP85526.1"/>
    <property type="molecule type" value="Genomic_DNA"/>
</dbReference>
<dbReference type="EMBL" id="AF540956">
    <property type="protein sequence ID" value="AAQ11222.1"/>
    <property type="molecule type" value="mRNA"/>
</dbReference>
<dbReference type="EMBL" id="AY258034">
    <property type="protein sequence ID" value="AAP13068.1"/>
    <property type="molecule type" value="mRNA"/>
</dbReference>
<dbReference type="EMBL" id="AL672217">
    <property type="protein sequence ID" value="CAD43439.1"/>
    <property type="molecule type" value="Genomic_DNA"/>
</dbReference>
<dbReference type="EMBL" id="BX323586">
    <property type="protein sequence ID" value="CAQ13470.1"/>
    <property type="molecule type" value="Genomic_DNA"/>
</dbReference>
<dbReference type="EMBL" id="AJ318758">
    <property type="protein sequence ID" value="CAC86466.1"/>
    <property type="molecule type" value="mRNA"/>
</dbReference>
<dbReference type="RefSeq" id="NP_571094.2">
    <property type="nucleotide sequence ID" value="NM_131019.5"/>
</dbReference>
<dbReference type="SMR" id="O42222"/>
<dbReference type="BioGRID" id="663041">
    <property type="interactions" value="2"/>
</dbReference>
<dbReference type="FunCoup" id="O42222">
    <property type="interactions" value="457"/>
</dbReference>
<dbReference type="STRING" id="7955.ENSDARP00000091159"/>
<dbReference type="GlyCosmos" id="O42222">
    <property type="glycosylation" value="2 sites, No reported glycans"/>
</dbReference>
<dbReference type="PaxDb" id="7955-ENSDARP00000091159"/>
<dbReference type="Ensembl" id="ENSDART00000100386">
    <property type="protein sequence ID" value="ENSDARP00000091159"/>
    <property type="gene ID" value="ENSDARG00000069133"/>
</dbReference>
<dbReference type="GeneID" id="798441"/>
<dbReference type="KEGG" id="dre:798441"/>
<dbReference type="AGR" id="ZFIN:ZDB-GENE-990415-165"/>
<dbReference type="CTD" id="798441"/>
<dbReference type="ZFIN" id="ZDB-GENE-990415-165">
    <property type="gene designation" value="mstnb"/>
</dbReference>
<dbReference type="eggNOG" id="KOG3900">
    <property type="taxonomic scope" value="Eukaryota"/>
</dbReference>
<dbReference type="HOGENOM" id="CLU_020515_6_1_1"/>
<dbReference type="InParanoid" id="O42222"/>
<dbReference type="OMA" id="CNACMWR"/>
<dbReference type="OrthoDB" id="5948587at2759"/>
<dbReference type="PhylomeDB" id="O42222"/>
<dbReference type="TreeFam" id="TF318514"/>
<dbReference type="PRO" id="PR:O42222"/>
<dbReference type="Proteomes" id="UP000000437">
    <property type="component" value="Chromosome 9"/>
</dbReference>
<dbReference type="Bgee" id="ENSDARG00000069133">
    <property type="expression patterns" value="Expressed in muscle tissue and 19 other cell types or tissues"/>
</dbReference>
<dbReference type="GO" id="GO:0005576">
    <property type="term" value="C:extracellular region"/>
    <property type="evidence" value="ECO:0000303"/>
    <property type="project" value="UniProtKB"/>
</dbReference>
<dbReference type="GO" id="GO:0005615">
    <property type="term" value="C:extracellular space"/>
    <property type="evidence" value="ECO:0000318"/>
    <property type="project" value="GO_Central"/>
</dbReference>
<dbReference type="GO" id="GO:0005125">
    <property type="term" value="F:cytokine activity"/>
    <property type="evidence" value="ECO:0000318"/>
    <property type="project" value="GO_Central"/>
</dbReference>
<dbReference type="GO" id="GO:0008083">
    <property type="term" value="F:growth factor activity"/>
    <property type="evidence" value="ECO:0000314"/>
    <property type="project" value="ZFIN"/>
</dbReference>
<dbReference type="GO" id="GO:0110021">
    <property type="term" value="P:cardiac muscle myoblast proliferation"/>
    <property type="evidence" value="ECO:0000315"/>
    <property type="project" value="ZFIN"/>
</dbReference>
<dbReference type="GO" id="GO:0006955">
    <property type="term" value="P:immune response"/>
    <property type="evidence" value="ECO:0000315"/>
    <property type="project" value="ZFIN"/>
</dbReference>
<dbReference type="GO" id="GO:0007517">
    <property type="term" value="P:muscle organ development"/>
    <property type="evidence" value="ECO:0000314"/>
    <property type="project" value="ZFIN"/>
</dbReference>
<dbReference type="GO" id="GO:0110023">
    <property type="term" value="P:negative regulation of cardiac muscle myoblast proliferation"/>
    <property type="evidence" value="ECO:0000315"/>
    <property type="project" value="ZFIN"/>
</dbReference>
<dbReference type="GO" id="GO:0045926">
    <property type="term" value="P:negative regulation of growth"/>
    <property type="evidence" value="ECO:0000314"/>
    <property type="project" value="UniProtKB"/>
</dbReference>
<dbReference type="GO" id="GO:0045967">
    <property type="term" value="P:negative regulation of growth rate"/>
    <property type="evidence" value="ECO:0000314"/>
    <property type="project" value="ZFIN"/>
</dbReference>
<dbReference type="GO" id="GO:0048642">
    <property type="term" value="P:negative regulation of skeletal muscle tissue development"/>
    <property type="evidence" value="ECO:0000315"/>
    <property type="project" value="ZFIN"/>
</dbReference>
<dbReference type="GO" id="GO:0045843">
    <property type="term" value="P:negative regulation of striated muscle tissue development"/>
    <property type="evidence" value="ECO:0000314"/>
    <property type="project" value="UniProtKB"/>
</dbReference>
<dbReference type="GO" id="GO:0014738">
    <property type="term" value="P:regulation of muscle hyperplasia"/>
    <property type="evidence" value="ECO:0000315"/>
    <property type="project" value="ZFIN"/>
</dbReference>
<dbReference type="GO" id="GO:0007519">
    <property type="term" value="P:skeletal muscle tissue development"/>
    <property type="evidence" value="ECO:0000314"/>
    <property type="project" value="ZFIN"/>
</dbReference>
<dbReference type="GO" id="GO:0007179">
    <property type="term" value="P:transforming growth factor beta receptor signaling pathway"/>
    <property type="evidence" value="ECO:0000314"/>
    <property type="project" value="UniProtKB"/>
</dbReference>
<dbReference type="GO" id="GO:0003222">
    <property type="term" value="P:ventricular trabecula myocardium morphogenesis"/>
    <property type="evidence" value="ECO:0000315"/>
    <property type="project" value="ZFIN"/>
</dbReference>
<dbReference type="CDD" id="cd19388">
    <property type="entry name" value="TGF_beta_GDF8"/>
    <property type="match status" value="1"/>
</dbReference>
<dbReference type="FunFam" id="2.60.120.970:FF:000003">
    <property type="entry name" value="Growth differentiation factor 11"/>
    <property type="match status" value="1"/>
</dbReference>
<dbReference type="FunFam" id="2.10.90.10:FF:000006">
    <property type="entry name" value="growth/differentiation factor 8"/>
    <property type="match status" value="1"/>
</dbReference>
<dbReference type="Gene3D" id="2.60.120.970">
    <property type="match status" value="1"/>
</dbReference>
<dbReference type="Gene3D" id="2.10.90.10">
    <property type="entry name" value="Cystine-knot cytokines"/>
    <property type="match status" value="1"/>
</dbReference>
<dbReference type="InterPro" id="IPR029034">
    <property type="entry name" value="Cystine-knot_cytokine"/>
</dbReference>
<dbReference type="InterPro" id="IPR001839">
    <property type="entry name" value="TGF-b_C"/>
</dbReference>
<dbReference type="InterPro" id="IPR001111">
    <property type="entry name" value="TGF-b_propeptide"/>
</dbReference>
<dbReference type="InterPro" id="IPR015615">
    <property type="entry name" value="TGF-beta-rel"/>
</dbReference>
<dbReference type="InterPro" id="IPR017948">
    <property type="entry name" value="TGFb_CS"/>
</dbReference>
<dbReference type="PANTHER" id="PTHR11848:SF150">
    <property type="entry name" value="GROWTH_DIFFERENTIATION FACTOR 8"/>
    <property type="match status" value="1"/>
</dbReference>
<dbReference type="PANTHER" id="PTHR11848">
    <property type="entry name" value="TGF-BETA FAMILY"/>
    <property type="match status" value="1"/>
</dbReference>
<dbReference type="Pfam" id="PF00019">
    <property type="entry name" value="TGF_beta"/>
    <property type="match status" value="1"/>
</dbReference>
<dbReference type="Pfam" id="PF00688">
    <property type="entry name" value="TGFb_propeptide"/>
    <property type="match status" value="1"/>
</dbReference>
<dbReference type="SMART" id="SM00204">
    <property type="entry name" value="TGFB"/>
    <property type="match status" value="1"/>
</dbReference>
<dbReference type="SUPFAM" id="SSF57501">
    <property type="entry name" value="Cystine-knot cytokines"/>
    <property type="match status" value="1"/>
</dbReference>
<dbReference type="PROSITE" id="PS00250">
    <property type="entry name" value="TGF_BETA_1"/>
    <property type="match status" value="1"/>
</dbReference>
<dbReference type="PROSITE" id="PS51362">
    <property type="entry name" value="TGF_BETA_2"/>
    <property type="match status" value="1"/>
</dbReference>
<accession>O42222</accession>
<accession>B0S643</accession>
<accession>Q7T1K5</accession>
<accession>Q8JFS0</accession>
<accession>Q8UUR8</accession>
<protein>
    <recommendedName>
        <fullName>Growth/differentiation factor 8</fullName>
        <shortName>GDF-8</shortName>
    </recommendedName>
    <alternativeName>
        <fullName>Myostatin</fullName>
    </alternativeName>
    <alternativeName>
        <fullName>Myostatin-1</fullName>
        <shortName>zfMSTN-1</shortName>
    </alternativeName>
    <alternativeName>
        <fullName>Myostatin-B</fullName>
    </alternativeName>
</protein>
<gene>
    <name type="primary">mstnb</name>
    <name type="synonym">gdf8</name>
    <name type="synonym">mstn</name>
    <name type="synonym">mstn-1</name>
    <name type="ORF">si:ch211-3o3.2</name>
</gene>
<keyword id="KW-0165">Cleavage on pair of basic residues</keyword>
<keyword id="KW-0202">Cytokine</keyword>
<keyword id="KW-1015">Disulfide bond</keyword>
<keyword id="KW-0325">Glycoprotein</keyword>
<keyword id="KW-0339">Growth factor</keyword>
<keyword id="KW-1185">Reference proteome</keyword>
<keyword id="KW-0964">Secreted</keyword>
<keyword id="KW-0732">Signal</keyword>
<feature type="signal peptide" evidence="3">
    <location>
        <begin position="1"/>
        <end position="22"/>
    </location>
</feature>
<feature type="propeptide" id="PRO_0000033976" evidence="3">
    <location>
        <begin position="23"/>
        <end position="265"/>
    </location>
</feature>
<feature type="chain" id="PRO_0000033977" description="Growth/differentiation factor 8">
    <location>
        <begin position="266"/>
        <end position="374"/>
    </location>
</feature>
<feature type="glycosylation site" description="N-linked (GlcNAc...) asparagine" evidence="3">
    <location>
        <position position="72"/>
    </location>
</feature>
<feature type="glycosylation site" description="N-linked (GlcNAc...) asparagine" evidence="3">
    <location>
        <position position="274"/>
    </location>
</feature>
<feature type="disulfide bond" evidence="2">
    <location>
        <begin position="271"/>
        <end position="281"/>
    </location>
</feature>
<feature type="disulfide bond" evidence="1">
    <location>
        <begin position="280"/>
        <end position="339"/>
    </location>
</feature>
<feature type="disulfide bond" evidence="1">
    <location>
        <begin position="308"/>
        <end position="371"/>
    </location>
</feature>
<feature type="disulfide bond" evidence="1">
    <location>
        <begin position="312"/>
        <end position="373"/>
    </location>
</feature>
<feature type="disulfide bond" description="Interchain" evidence="1">
    <location>
        <position position="338"/>
    </location>
</feature>
<feature type="sequence conflict" description="In Ref. 1; AAB86693, 2; AAP85526, 3; AAQ11222 and 4; AAP13068." evidence="11" ref="1 2 3 4">
    <original>Q</original>
    <variation>L</variation>
    <location>
        <position position="39"/>
    </location>
</feature>
<feature type="sequence conflict" description="In Ref. 2; AAP85526." evidence="11" ref="2">
    <original>S</original>
    <variation>G</variation>
    <location>
        <position position="204"/>
    </location>
</feature>
<feature type="sequence conflict" description="In Ref. 2; AAP85526." evidence="11" ref="2">
    <original>S</original>
    <variation>G</variation>
    <location>
        <position position="330"/>
    </location>
</feature>
<feature type="sequence conflict" description="In Ref. 2; AAP85526." evidence="11" ref="2">
    <location>
        <position position="367"/>
    </location>
</feature>
<proteinExistence type="evidence at transcript level"/>
<name>GDF8_DANRE</name>